<gene>
    <name evidence="1" type="primary">nhaP2</name>
    <name type="synonym">cvrA</name>
    <name type="ordered locus">SO_3747</name>
</gene>
<keyword id="KW-0050">Antiport</keyword>
<keyword id="KW-0997">Cell inner membrane</keyword>
<keyword id="KW-1003">Cell membrane</keyword>
<keyword id="KW-0406">Ion transport</keyword>
<keyword id="KW-0472">Membrane</keyword>
<keyword id="KW-0630">Potassium</keyword>
<keyword id="KW-0633">Potassium transport</keyword>
<keyword id="KW-1185">Reference proteome</keyword>
<keyword id="KW-0812">Transmembrane</keyword>
<keyword id="KW-1133">Transmembrane helix</keyword>
<keyword id="KW-0813">Transport</keyword>
<evidence type="ECO:0000255" key="1">
    <source>
        <dbReference type="HAMAP-Rule" id="MF_01075"/>
    </source>
</evidence>
<name>NHAP2_SHEON</name>
<sequence length="574" mass="61343">MDADSINSFFLIGALLTAVSVLLSPMSSRLGIPILLIFLAVGILAGEDGPGGILFDDYSTAYLVSNFALAIILLDGGMRTRVASFRVALWPALSLATFGVAITTSITGVMAAWLFDLHWLQGLLVGAIVGSTDAAAVFSLLKGRSLNERVGATLEIESGSNDPMAVFLTVTLIAILANVGAELSASFMLISFIKQFGLGVLLGLGGGWLLWKLVNVSKLAEGLYSILVLSGGLMIYATSNKLGGSGILSIYLVGLFLGNKPTRGRHAILNVLDGMTWVSQIGMFLVLGLLLTPSDLLDIWLPGLALAFGMILFARPLAVWLSLLPFKSFGSRDRWFISWVGLRGAVPIILAVFPMMAGLPGAQLYFNLAFFVVIVSLLVQGASLTTAARLAKVELPPKPLPISRSGVEIYPKSEWEVFVYCLSESKWCIGEPLKRLAMPDGTRIAAVFRNNTLLHPSGSTCLEAGDILCVLGQEKSLEALSNLFSQAPETDEVSRFFGDFFIDTEVKLADLAPIYGLTLDDETGAMTVADLVALELGAHPVLGDQFLWQSLHWVVAGLYEGKVTNVGIRLPADA</sequence>
<accession>Q8EAZ0</accession>
<proteinExistence type="inferred from homology"/>
<dbReference type="EMBL" id="AE014299">
    <property type="protein sequence ID" value="AAN56730.1"/>
    <property type="molecule type" value="Genomic_DNA"/>
</dbReference>
<dbReference type="RefSeq" id="NP_719286.1">
    <property type="nucleotide sequence ID" value="NC_004347.2"/>
</dbReference>
<dbReference type="RefSeq" id="WP_011073529.1">
    <property type="nucleotide sequence ID" value="NC_004347.2"/>
</dbReference>
<dbReference type="SMR" id="Q8EAZ0"/>
<dbReference type="STRING" id="211586.SO_3747"/>
<dbReference type="PaxDb" id="211586-SO_3747"/>
<dbReference type="KEGG" id="son:SO_3747"/>
<dbReference type="PATRIC" id="fig|211586.12.peg.3630"/>
<dbReference type="eggNOG" id="COG3263">
    <property type="taxonomic scope" value="Bacteria"/>
</dbReference>
<dbReference type="HOGENOM" id="CLU_005912_9_2_6"/>
<dbReference type="OrthoDB" id="9810759at2"/>
<dbReference type="PhylomeDB" id="Q8EAZ0"/>
<dbReference type="BioCyc" id="SONE211586:G1GMP-3481-MONOMER"/>
<dbReference type="Proteomes" id="UP000008186">
    <property type="component" value="Chromosome"/>
</dbReference>
<dbReference type="GO" id="GO:0005886">
    <property type="term" value="C:plasma membrane"/>
    <property type="evidence" value="ECO:0007669"/>
    <property type="project" value="UniProtKB-SubCell"/>
</dbReference>
<dbReference type="GO" id="GO:0050660">
    <property type="term" value="F:flavin adenine dinucleotide binding"/>
    <property type="evidence" value="ECO:0007669"/>
    <property type="project" value="InterPro"/>
</dbReference>
<dbReference type="GO" id="GO:0015386">
    <property type="term" value="F:potassium:proton antiporter activity"/>
    <property type="evidence" value="ECO:0000318"/>
    <property type="project" value="GO_Central"/>
</dbReference>
<dbReference type="GO" id="GO:0006884">
    <property type="term" value="P:cell volume homeostasis"/>
    <property type="evidence" value="ECO:0007669"/>
    <property type="project" value="InterPro"/>
</dbReference>
<dbReference type="GO" id="GO:0030007">
    <property type="term" value="P:intracellular potassium ion homeostasis"/>
    <property type="evidence" value="ECO:0000318"/>
    <property type="project" value="GO_Central"/>
</dbReference>
<dbReference type="Gene3D" id="1.20.1530.20">
    <property type="match status" value="1"/>
</dbReference>
<dbReference type="Gene3D" id="3.30.70.1450">
    <property type="entry name" value="Regulator of K+ conductance, C-terminal domain"/>
    <property type="match status" value="1"/>
</dbReference>
<dbReference type="HAMAP" id="MF_01075">
    <property type="entry name" value="NhaP2"/>
    <property type="match status" value="1"/>
</dbReference>
<dbReference type="InterPro" id="IPR006153">
    <property type="entry name" value="Cation/H_exchanger_TM"/>
</dbReference>
<dbReference type="InterPro" id="IPR036318">
    <property type="entry name" value="FAD-bd_PCMH-like_sf"/>
</dbReference>
<dbReference type="InterPro" id="IPR038770">
    <property type="entry name" value="Na+/solute_symporter_sf"/>
</dbReference>
<dbReference type="InterPro" id="IPR023729">
    <property type="entry name" value="NhaP2"/>
</dbReference>
<dbReference type="InterPro" id="IPR006037">
    <property type="entry name" value="RCK_C"/>
</dbReference>
<dbReference type="InterPro" id="IPR036721">
    <property type="entry name" value="RCK_C_sf"/>
</dbReference>
<dbReference type="InterPro" id="IPR005170">
    <property type="entry name" value="Transptr-assoc_dom"/>
</dbReference>
<dbReference type="NCBIfam" id="NF003714">
    <property type="entry name" value="PRK05326.1-1"/>
    <property type="match status" value="1"/>
</dbReference>
<dbReference type="NCBIfam" id="NF003715">
    <property type="entry name" value="PRK05326.1-2"/>
    <property type="match status" value="1"/>
</dbReference>
<dbReference type="NCBIfam" id="NF003716">
    <property type="entry name" value="PRK05326.1-3"/>
    <property type="match status" value="1"/>
</dbReference>
<dbReference type="PANTHER" id="PTHR32507:SF7">
    <property type="entry name" value="K(+)_H(+) ANTIPORTER NHAP2"/>
    <property type="match status" value="1"/>
</dbReference>
<dbReference type="PANTHER" id="PTHR32507">
    <property type="entry name" value="NA(+)/H(+) ANTIPORTER 1"/>
    <property type="match status" value="1"/>
</dbReference>
<dbReference type="Pfam" id="PF03471">
    <property type="entry name" value="CorC_HlyC"/>
    <property type="match status" value="1"/>
</dbReference>
<dbReference type="Pfam" id="PF00999">
    <property type="entry name" value="Na_H_Exchanger"/>
    <property type="match status" value="1"/>
</dbReference>
<dbReference type="Pfam" id="PF02080">
    <property type="entry name" value="TrkA_C"/>
    <property type="match status" value="1"/>
</dbReference>
<dbReference type="SMART" id="SM01091">
    <property type="entry name" value="CorC_HlyC"/>
    <property type="match status" value="1"/>
</dbReference>
<dbReference type="SUPFAM" id="SSF56176">
    <property type="entry name" value="FAD-binding/transporter-associated domain-like"/>
    <property type="match status" value="1"/>
</dbReference>
<dbReference type="SUPFAM" id="SSF116726">
    <property type="entry name" value="TrkA C-terminal domain-like"/>
    <property type="match status" value="1"/>
</dbReference>
<dbReference type="PROSITE" id="PS51202">
    <property type="entry name" value="RCK_C"/>
    <property type="match status" value="1"/>
</dbReference>
<protein>
    <recommendedName>
        <fullName evidence="1">K(+)/H(+) antiporter NhaP2</fullName>
    </recommendedName>
    <alternativeName>
        <fullName evidence="1">Potassium/proton antiporter NhaP2</fullName>
    </alternativeName>
</protein>
<feature type="chain" id="PRO_0000052396" description="K(+)/H(+) antiporter NhaP2">
    <location>
        <begin position="1"/>
        <end position="574"/>
    </location>
</feature>
<feature type="transmembrane region" description="Helical" evidence="1">
    <location>
        <begin position="6"/>
        <end position="26"/>
    </location>
</feature>
<feature type="transmembrane region" description="Helical" evidence="1">
    <location>
        <begin position="34"/>
        <end position="54"/>
    </location>
</feature>
<feature type="transmembrane region" description="Helical" evidence="1">
    <location>
        <begin position="58"/>
        <end position="78"/>
    </location>
</feature>
<feature type="transmembrane region" description="Helical" evidence="1">
    <location>
        <begin position="87"/>
        <end position="107"/>
    </location>
</feature>
<feature type="transmembrane region" description="Helical" evidence="1">
    <location>
        <begin position="109"/>
        <end position="129"/>
    </location>
</feature>
<feature type="transmembrane region" description="Helical" evidence="1">
    <location>
        <begin position="173"/>
        <end position="193"/>
    </location>
</feature>
<feature type="transmembrane region" description="Helical" evidence="1">
    <location>
        <begin position="196"/>
        <end position="216"/>
    </location>
</feature>
<feature type="transmembrane region" description="Helical" evidence="1">
    <location>
        <begin position="219"/>
        <end position="239"/>
    </location>
</feature>
<feature type="transmembrane region" description="Helical" evidence="1">
    <location>
        <begin position="242"/>
        <end position="262"/>
    </location>
</feature>
<feature type="transmembrane region" description="Helical" evidence="1">
    <location>
        <begin position="271"/>
        <end position="291"/>
    </location>
</feature>
<feature type="transmembrane region" description="Helical" evidence="1">
    <location>
        <begin position="299"/>
        <end position="319"/>
    </location>
</feature>
<feature type="transmembrane region" description="Helical" evidence="1">
    <location>
        <begin position="335"/>
        <end position="355"/>
    </location>
</feature>
<feature type="transmembrane region" description="Helical" evidence="1">
    <location>
        <begin position="359"/>
        <end position="379"/>
    </location>
</feature>
<feature type="domain" description="RCK C-terminal" evidence="1">
    <location>
        <begin position="405"/>
        <end position="486"/>
    </location>
</feature>
<organism>
    <name type="scientific">Shewanella oneidensis (strain ATCC 700550 / JCM 31522 / CIP 106686 / LMG 19005 / NCIMB 14063 / MR-1)</name>
    <dbReference type="NCBI Taxonomy" id="211586"/>
    <lineage>
        <taxon>Bacteria</taxon>
        <taxon>Pseudomonadati</taxon>
        <taxon>Pseudomonadota</taxon>
        <taxon>Gammaproteobacteria</taxon>
        <taxon>Alteromonadales</taxon>
        <taxon>Shewanellaceae</taxon>
        <taxon>Shewanella</taxon>
    </lineage>
</organism>
<reference key="1">
    <citation type="journal article" date="2002" name="Nat. Biotechnol.">
        <title>Genome sequence of the dissimilatory metal ion-reducing bacterium Shewanella oneidensis.</title>
        <authorList>
            <person name="Heidelberg J.F."/>
            <person name="Paulsen I.T."/>
            <person name="Nelson K.E."/>
            <person name="Gaidos E.J."/>
            <person name="Nelson W.C."/>
            <person name="Read T.D."/>
            <person name="Eisen J.A."/>
            <person name="Seshadri R."/>
            <person name="Ward N.L."/>
            <person name="Methe B.A."/>
            <person name="Clayton R.A."/>
            <person name="Meyer T."/>
            <person name="Tsapin A."/>
            <person name="Scott J."/>
            <person name="Beanan M.J."/>
            <person name="Brinkac L.M."/>
            <person name="Daugherty S.C."/>
            <person name="DeBoy R.T."/>
            <person name="Dodson R.J."/>
            <person name="Durkin A.S."/>
            <person name="Haft D.H."/>
            <person name="Kolonay J.F."/>
            <person name="Madupu R."/>
            <person name="Peterson J.D."/>
            <person name="Umayam L.A."/>
            <person name="White O."/>
            <person name="Wolf A.M."/>
            <person name="Vamathevan J.J."/>
            <person name="Weidman J.F."/>
            <person name="Impraim M."/>
            <person name="Lee K."/>
            <person name="Berry K.J."/>
            <person name="Lee C."/>
            <person name="Mueller J."/>
            <person name="Khouri H.M."/>
            <person name="Gill J."/>
            <person name="Utterback T.R."/>
            <person name="McDonald L.A."/>
            <person name="Feldblyum T.V."/>
            <person name="Smith H.O."/>
            <person name="Venter J.C."/>
            <person name="Nealson K.H."/>
            <person name="Fraser C.M."/>
        </authorList>
    </citation>
    <scope>NUCLEOTIDE SEQUENCE [LARGE SCALE GENOMIC DNA]</scope>
    <source>
        <strain>ATCC 700550 / JCM 31522 / CIP 106686 / LMG 19005 / NCIMB 14063 / MR-1</strain>
    </source>
</reference>
<comment type="function">
    <text evidence="1">K(+)/H(+) antiporter that extrudes potassium in exchange for external protons and maintains the internal concentration of potassium under toxic levels.</text>
</comment>
<comment type="catalytic activity">
    <reaction evidence="1">
        <text>K(+)(in) + H(+)(out) = K(+)(out) + H(+)(in)</text>
        <dbReference type="Rhea" id="RHEA:29467"/>
        <dbReference type="ChEBI" id="CHEBI:15378"/>
        <dbReference type="ChEBI" id="CHEBI:29103"/>
    </reaction>
    <physiologicalReaction direction="left-to-right" evidence="1">
        <dbReference type="Rhea" id="RHEA:29468"/>
    </physiologicalReaction>
</comment>
<comment type="subcellular location">
    <subcellularLocation>
        <location evidence="1">Cell inner membrane</location>
        <topology evidence="1">Multi-pass membrane protein</topology>
    </subcellularLocation>
</comment>
<comment type="similarity">
    <text evidence="1">Belongs to the monovalent cation:proton antiporter 1 (CPA1) transporter (TC 2.A.36) family. NhaP2 subfamily.</text>
</comment>